<reference key="1">
    <citation type="journal article" date="2004" name="Nucleic Acids Res.">
        <title>Whole genome comparisons of serotype 4b and 1/2a strains of the food-borne pathogen Listeria monocytogenes reveal new insights into the core genome components of this species.</title>
        <authorList>
            <person name="Nelson K.E."/>
            <person name="Fouts D.E."/>
            <person name="Mongodin E.F."/>
            <person name="Ravel J."/>
            <person name="DeBoy R.T."/>
            <person name="Kolonay J.F."/>
            <person name="Rasko D.A."/>
            <person name="Angiuoli S.V."/>
            <person name="Gill S.R."/>
            <person name="Paulsen I.T."/>
            <person name="Peterson J.D."/>
            <person name="White O."/>
            <person name="Nelson W.C."/>
            <person name="Nierman W.C."/>
            <person name="Beanan M.J."/>
            <person name="Brinkac L.M."/>
            <person name="Daugherty S.C."/>
            <person name="Dodson R.J."/>
            <person name="Durkin A.S."/>
            <person name="Madupu R."/>
            <person name="Haft D.H."/>
            <person name="Selengut J."/>
            <person name="Van Aken S.E."/>
            <person name="Khouri H.M."/>
            <person name="Fedorova N."/>
            <person name="Forberger H.A."/>
            <person name="Tran B."/>
            <person name="Kathariou S."/>
            <person name="Wonderling L.D."/>
            <person name="Uhlich G.A."/>
            <person name="Bayles D.O."/>
            <person name="Luchansky J.B."/>
            <person name="Fraser C.M."/>
        </authorList>
    </citation>
    <scope>NUCLEOTIDE SEQUENCE [LARGE SCALE GENOMIC DNA]</scope>
    <source>
        <strain>F2365</strain>
    </source>
</reference>
<keyword id="KW-0488">Methylation</keyword>
<keyword id="KW-0687">Ribonucleoprotein</keyword>
<keyword id="KW-0689">Ribosomal protein</keyword>
<keyword id="KW-0694">RNA-binding</keyword>
<keyword id="KW-0699">rRNA-binding</keyword>
<gene>
    <name evidence="1" type="primary">rplK</name>
    <name type="ordered locus">LMOf2365_0260</name>
</gene>
<accession>Q724G4</accession>
<protein>
    <recommendedName>
        <fullName evidence="1">Large ribosomal subunit protein uL11</fullName>
    </recommendedName>
    <alternativeName>
        <fullName evidence="2">50S ribosomal protein L11</fullName>
    </alternativeName>
</protein>
<dbReference type="EMBL" id="AE017262">
    <property type="protein sequence ID" value="AAT03047.1"/>
    <property type="molecule type" value="Genomic_DNA"/>
</dbReference>
<dbReference type="RefSeq" id="WP_003718336.1">
    <property type="nucleotide sequence ID" value="NC_002973.6"/>
</dbReference>
<dbReference type="SMR" id="Q724G4"/>
<dbReference type="GeneID" id="93238162"/>
<dbReference type="KEGG" id="lmf:LMOf2365_0260"/>
<dbReference type="HOGENOM" id="CLU_074237_2_1_9"/>
<dbReference type="GO" id="GO:0022625">
    <property type="term" value="C:cytosolic large ribosomal subunit"/>
    <property type="evidence" value="ECO:0007669"/>
    <property type="project" value="TreeGrafter"/>
</dbReference>
<dbReference type="GO" id="GO:0070180">
    <property type="term" value="F:large ribosomal subunit rRNA binding"/>
    <property type="evidence" value="ECO:0007669"/>
    <property type="project" value="UniProtKB-UniRule"/>
</dbReference>
<dbReference type="GO" id="GO:0003735">
    <property type="term" value="F:structural constituent of ribosome"/>
    <property type="evidence" value="ECO:0007669"/>
    <property type="project" value="InterPro"/>
</dbReference>
<dbReference type="GO" id="GO:0006412">
    <property type="term" value="P:translation"/>
    <property type="evidence" value="ECO:0007669"/>
    <property type="project" value="UniProtKB-UniRule"/>
</dbReference>
<dbReference type="CDD" id="cd00349">
    <property type="entry name" value="Ribosomal_L11"/>
    <property type="match status" value="1"/>
</dbReference>
<dbReference type="FunFam" id="1.10.10.250:FF:000001">
    <property type="entry name" value="50S ribosomal protein L11"/>
    <property type="match status" value="1"/>
</dbReference>
<dbReference type="FunFam" id="3.30.1550.10:FF:000001">
    <property type="entry name" value="50S ribosomal protein L11"/>
    <property type="match status" value="1"/>
</dbReference>
<dbReference type="Gene3D" id="1.10.10.250">
    <property type="entry name" value="Ribosomal protein L11, C-terminal domain"/>
    <property type="match status" value="1"/>
</dbReference>
<dbReference type="Gene3D" id="3.30.1550.10">
    <property type="entry name" value="Ribosomal protein L11/L12, N-terminal domain"/>
    <property type="match status" value="1"/>
</dbReference>
<dbReference type="HAMAP" id="MF_00736">
    <property type="entry name" value="Ribosomal_uL11"/>
    <property type="match status" value="1"/>
</dbReference>
<dbReference type="InterPro" id="IPR000911">
    <property type="entry name" value="Ribosomal_uL11"/>
</dbReference>
<dbReference type="InterPro" id="IPR006519">
    <property type="entry name" value="Ribosomal_uL11_bac-typ"/>
</dbReference>
<dbReference type="InterPro" id="IPR020783">
    <property type="entry name" value="Ribosomal_uL11_C"/>
</dbReference>
<dbReference type="InterPro" id="IPR036769">
    <property type="entry name" value="Ribosomal_uL11_C_sf"/>
</dbReference>
<dbReference type="InterPro" id="IPR020784">
    <property type="entry name" value="Ribosomal_uL11_N"/>
</dbReference>
<dbReference type="InterPro" id="IPR036796">
    <property type="entry name" value="Ribosomal_uL11_N_sf"/>
</dbReference>
<dbReference type="NCBIfam" id="TIGR01632">
    <property type="entry name" value="L11_bact"/>
    <property type="match status" value="1"/>
</dbReference>
<dbReference type="PANTHER" id="PTHR11661">
    <property type="entry name" value="60S RIBOSOMAL PROTEIN L12"/>
    <property type="match status" value="1"/>
</dbReference>
<dbReference type="PANTHER" id="PTHR11661:SF1">
    <property type="entry name" value="LARGE RIBOSOMAL SUBUNIT PROTEIN UL11M"/>
    <property type="match status" value="1"/>
</dbReference>
<dbReference type="Pfam" id="PF00298">
    <property type="entry name" value="Ribosomal_L11"/>
    <property type="match status" value="1"/>
</dbReference>
<dbReference type="Pfam" id="PF03946">
    <property type="entry name" value="Ribosomal_L11_N"/>
    <property type="match status" value="1"/>
</dbReference>
<dbReference type="SMART" id="SM00649">
    <property type="entry name" value="RL11"/>
    <property type="match status" value="1"/>
</dbReference>
<dbReference type="SUPFAM" id="SSF54747">
    <property type="entry name" value="Ribosomal L11/L12e N-terminal domain"/>
    <property type="match status" value="1"/>
</dbReference>
<dbReference type="SUPFAM" id="SSF46906">
    <property type="entry name" value="Ribosomal protein L11, C-terminal domain"/>
    <property type="match status" value="1"/>
</dbReference>
<sequence length="141" mass="14860">MAKKVIKEVKLQIPAGKANPAPPVGPALGQAGVNIMGFCKEFNARTADQAGLIIPVVITVFEDRSFTFITKTPPAAVLLKKAAKVEKGSGEPNKTKVASVTRAQVQEIAETKMPDLNAANVESAMLMVEGTARSMGITIQD</sequence>
<comment type="function">
    <text evidence="1">Forms part of the ribosomal stalk which helps the ribosome interact with GTP-bound translation factors.</text>
</comment>
<comment type="subunit">
    <text evidence="1">Part of the ribosomal stalk of the 50S ribosomal subunit. Interacts with L10 and the large rRNA to form the base of the stalk. L10 forms an elongated spine to which L12 dimers bind in a sequential fashion forming a multimeric L10(L12)X complex.</text>
</comment>
<comment type="PTM">
    <text evidence="1">One or more lysine residues are methylated.</text>
</comment>
<comment type="similarity">
    <text evidence="1">Belongs to the universal ribosomal protein uL11 family.</text>
</comment>
<proteinExistence type="inferred from homology"/>
<feature type="chain" id="PRO_0000104310" description="Large ribosomal subunit protein uL11">
    <location>
        <begin position="1"/>
        <end position="141"/>
    </location>
</feature>
<name>RL11_LISMF</name>
<organism>
    <name type="scientific">Listeria monocytogenes serotype 4b (strain F2365)</name>
    <dbReference type="NCBI Taxonomy" id="265669"/>
    <lineage>
        <taxon>Bacteria</taxon>
        <taxon>Bacillati</taxon>
        <taxon>Bacillota</taxon>
        <taxon>Bacilli</taxon>
        <taxon>Bacillales</taxon>
        <taxon>Listeriaceae</taxon>
        <taxon>Listeria</taxon>
    </lineage>
</organism>
<evidence type="ECO:0000255" key="1">
    <source>
        <dbReference type="HAMAP-Rule" id="MF_00736"/>
    </source>
</evidence>
<evidence type="ECO:0000305" key="2"/>